<protein>
    <recommendedName>
        <fullName>Serine/threonine-protein kinase pim-3</fullName>
        <ecNumber>2.7.11.1</ecNumber>
    </recommendedName>
    <alternativeName>
        <fullName>Pim-1</fullName>
    </alternativeName>
</protein>
<comment type="function">
    <text evidence="1">Proto-oncogene with serine/threonine kinase activity that can prevent apoptosis and promote cell survival and protein translation.</text>
</comment>
<comment type="catalytic activity">
    <reaction>
        <text>L-seryl-[protein] + ATP = O-phospho-L-seryl-[protein] + ADP + H(+)</text>
        <dbReference type="Rhea" id="RHEA:17989"/>
        <dbReference type="Rhea" id="RHEA-COMP:9863"/>
        <dbReference type="Rhea" id="RHEA-COMP:11604"/>
        <dbReference type="ChEBI" id="CHEBI:15378"/>
        <dbReference type="ChEBI" id="CHEBI:29999"/>
        <dbReference type="ChEBI" id="CHEBI:30616"/>
        <dbReference type="ChEBI" id="CHEBI:83421"/>
        <dbReference type="ChEBI" id="CHEBI:456216"/>
        <dbReference type="EC" id="2.7.11.1"/>
    </reaction>
</comment>
<comment type="catalytic activity">
    <reaction>
        <text>L-threonyl-[protein] + ATP = O-phospho-L-threonyl-[protein] + ADP + H(+)</text>
        <dbReference type="Rhea" id="RHEA:46608"/>
        <dbReference type="Rhea" id="RHEA-COMP:11060"/>
        <dbReference type="Rhea" id="RHEA-COMP:11605"/>
        <dbReference type="ChEBI" id="CHEBI:15378"/>
        <dbReference type="ChEBI" id="CHEBI:30013"/>
        <dbReference type="ChEBI" id="CHEBI:30616"/>
        <dbReference type="ChEBI" id="CHEBI:61977"/>
        <dbReference type="ChEBI" id="CHEBI:456216"/>
        <dbReference type="EC" id="2.7.11.1"/>
    </reaction>
</comment>
<comment type="subcellular location">
    <subcellularLocation>
        <location evidence="1">Cytoplasm</location>
    </subcellularLocation>
</comment>
<comment type="PTM">
    <text evidence="4">Autophosphorylated.</text>
</comment>
<comment type="similarity">
    <text evidence="5">Belongs to the protein kinase superfamily. CAMK Ser/Thr protein kinase family. PIM subfamily.</text>
</comment>
<comment type="caution">
    <text evidence="6">Was originally called Pim-1 but seems to represent the protein pim3.</text>
</comment>
<reference key="1">
    <citation type="journal article" date="1997" name="J. Biol. Chem.">
        <title>Identification of the autophosphorylation sites of the Xenopus laevis Pim-1 proto-oncogene-encoded protein kinase.</title>
        <authorList>
            <person name="Palaty C.K."/>
            <person name="Kalmar G."/>
            <person name="Tai G."/>
            <person name="Oh S."/>
            <person name="Amankawa L."/>
            <person name="Affolter M."/>
            <person name="Aebersold R."/>
            <person name="Pelech S.L."/>
        </authorList>
    </citation>
    <scope>NUCLEOTIDE SEQUENCE [MRNA]</scope>
    <scope>PHOSPHORYLATION AT SER-4; SER-190 AND THR-205</scope>
</reference>
<evidence type="ECO:0000250" key="1"/>
<evidence type="ECO:0000255" key="2">
    <source>
        <dbReference type="PROSITE-ProRule" id="PRU00159"/>
    </source>
</evidence>
<evidence type="ECO:0000255" key="3">
    <source>
        <dbReference type="PROSITE-ProRule" id="PRU10027"/>
    </source>
</evidence>
<evidence type="ECO:0000269" key="4">
    <source>
    </source>
</evidence>
<evidence type="ECO:0000305" key="5"/>
<evidence type="ECO:0000305" key="6">
    <source>
    </source>
</evidence>
<proteinExistence type="evidence at protein level"/>
<gene>
    <name type="primary">pim3</name>
    <name type="synonym">pim1</name>
</gene>
<sequence>MLLSKFGSLAHICNPSNMEHLPVKILQPVKVDKEPFEKVYQVGSVVASGGFGTVYSDSRIADGQPVAVKHVAKERVTEWGTLNGVMVPLEIVLLKKVPTAFRGVINLLDWYERPDAFLIVMERPEPVKDLFDYITEKGPLDEDTARGFFRQVLEAVRHCYNCGVVHRDIKDENLLVDTRNGELKLIDFGSGALLKDTVYTDFDGTRVYSPPEWVRYHRYHGRSATVWSLGVLLYDMVYGDIPFEQDEEIVRVRLCFRRRISTECQQLIKWCLSLRPSDRPTLEQIFDHPWMCKCDLVKSEDCDLRLRTIDNDSSSTSSSNESL</sequence>
<organism>
    <name type="scientific">Xenopus laevis</name>
    <name type="common">African clawed frog</name>
    <dbReference type="NCBI Taxonomy" id="8355"/>
    <lineage>
        <taxon>Eukaryota</taxon>
        <taxon>Metazoa</taxon>
        <taxon>Chordata</taxon>
        <taxon>Craniata</taxon>
        <taxon>Vertebrata</taxon>
        <taxon>Euteleostomi</taxon>
        <taxon>Amphibia</taxon>
        <taxon>Batrachia</taxon>
        <taxon>Anura</taxon>
        <taxon>Pipoidea</taxon>
        <taxon>Pipidae</taxon>
        <taxon>Xenopodinae</taxon>
        <taxon>Xenopus</taxon>
        <taxon>Xenopus</taxon>
    </lineage>
</organism>
<name>PIM3_XENLA</name>
<feature type="chain" id="PRO_0000086537" description="Serine/threonine-protein kinase pim-3">
    <location>
        <begin position="1"/>
        <end position="323"/>
    </location>
</feature>
<feature type="domain" description="Protein kinase" evidence="2">
    <location>
        <begin position="40"/>
        <end position="291"/>
    </location>
</feature>
<feature type="active site" description="Proton acceptor" evidence="2 3">
    <location>
        <position position="168"/>
    </location>
</feature>
<feature type="binding site" evidence="2">
    <location>
        <begin position="46"/>
        <end position="54"/>
    </location>
    <ligand>
        <name>ATP</name>
        <dbReference type="ChEBI" id="CHEBI:30616"/>
    </ligand>
</feature>
<feature type="binding site" evidence="2">
    <location>
        <position position="69"/>
    </location>
    <ligand>
        <name>ATP</name>
        <dbReference type="ChEBI" id="CHEBI:30616"/>
    </ligand>
</feature>
<feature type="modified residue" description="Phosphoserine; by autocatalysis" evidence="4">
    <location>
        <position position="4"/>
    </location>
</feature>
<feature type="modified residue" description="Phosphoserine; by autocatalysis" evidence="4">
    <location>
        <position position="190"/>
    </location>
</feature>
<feature type="modified residue" description="Phosphothreonine; by autocatalysis" evidence="4">
    <location>
        <position position="205"/>
    </location>
</feature>
<keyword id="KW-0053">Apoptosis</keyword>
<keyword id="KW-0067">ATP-binding</keyword>
<keyword id="KW-0963">Cytoplasm</keyword>
<keyword id="KW-0418">Kinase</keyword>
<keyword id="KW-0547">Nucleotide-binding</keyword>
<keyword id="KW-0597">Phosphoprotein</keyword>
<keyword id="KW-0656">Proto-oncogene</keyword>
<keyword id="KW-1185">Reference proteome</keyword>
<keyword id="KW-0723">Serine/threonine-protein kinase</keyword>
<keyword id="KW-0808">Transferase</keyword>
<accession>Q91822</accession>
<dbReference type="EC" id="2.7.11.1"/>
<dbReference type="EMBL" id="L29495">
    <property type="protein sequence ID" value="AAA85389.1"/>
    <property type="molecule type" value="mRNA"/>
</dbReference>
<dbReference type="RefSeq" id="NP_001081037.1">
    <property type="nucleotide sequence ID" value="NM_001087568.1"/>
</dbReference>
<dbReference type="SMR" id="Q91822"/>
<dbReference type="iPTMnet" id="Q91822"/>
<dbReference type="GeneID" id="394343"/>
<dbReference type="KEGG" id="xla:394343"/>
<dbReference type="AGR" id="Xenbase:XB-GENE-17343708"/>
<dbReference type="CTD" id="394343"/>
<dbReference type="Xenbase" id="XB-GENE-17343708">
    <property type="gene designation" value="pim3.S"/>
</dbReference>
<dbReference type="OrthoDB" id="10252171at2759"/>
<dbReference type="Proteomes" id="UP000186698">
    <property type="component" value="Chromosome 3S"/>
</dbReference>
<dbReference type="Bgee" id="394343">
    <property type="expression patterns" value="Expressed in egg cell and 19 other cell types or tissues"/>
</dbReference>
<dbReference type="GO" id="GO:0005737">
    <property type="term" value="C:cytoplasm"/>
    <property type="evidence" value="ECO:0000318"/>
    <property type="project" value="GO_Central"/>
</dbReference>
<dbReference type="GO" id="GO:0005524">
    <property type="term" value="F:ATP binding"/>
    <property type="evidence" value="ECO:0007669"/>
    <property type="project" value="UniProtKB-KW"/>
</dbReference>
<dbReference type="GO" id="GO:0106310">
    <property type="term" value="F:protein serine kinase activity"/>
    <property type="evidence" value="ECO:0007669"/>
    <property type="project" value="RHEA"/>
</dbReference>
<dbReference type="GO" id="GO:0004674">
    <property type="term" value="F:protein serine/threonine kinase activity"/>
    <property type="evidence" value="ECO:0000318"/>
    <property type="project" value="GO_Central"/>
</dbReference>
<dbReference type="GO" id="GO:0006915">
    <property type="term" value="P:apoptotic process"/>
    <property type="evidence" value="ECO:0007669"/>
    <property type="project" value="UniProtKB-KW"/>
</dbReference>
<dbReference type="GO" id="GO:0043066">
    <property type="term" value="P:negative regulation of apoptotic process"/>
    <property type="evidence" value="ECO:0000318"/>
    <property type="project" value="GO_Central"/>
</dbReference>
<dbReference type="GO" id="GO:0007346">
    <property type="term" value="P:regulation of mitotic cell cycle"/>
    <property type="evidence" value="ECO:0000318"/>
    <property type="project" value="GO_Central"/>
</dbReference>
<dbReference type="CDD" id="cd14102">
    <property type="entry name" value="STKc_PIM3"/>
    <property type="match status" value="1"/>
</dbReference>
<dbReference type="FunFam" id="1.10.510.10:FF:000209">
    <property type="entry name" value="Serine/threonine-protein kinase pim-1"/>
    <property type="match status" value="1"/>
</dbReference>
<dbReference type="FunFam" id="3.30.200.20:FF:000232">
    <property type="entry name" value="Serine/threonine-protein kinase pim-1"/>
    <property type="match status" value="1"/>
</dbReference>
<dbReference type="Gene3D" id="3.30.200.20">
    <property type="entry name" value="Phosphorylase Kinase, domain 1"/>
    <property type="match status" value="1"/>
</dbReference>
<dbReference type="Gene3D" id="1.10.510.10">
    <property type="entry name" value="Transferase(Phosphotransferase) domain 1"/>
    <property type="match status" value="1"/>
</dbReference>
<dbReference type="InterPro" id="IPR011009">
    <property type="entry name" value="Kinase-like_dom_sf"/>
</dbReference>
<dbReference type="InterPro" id="IPR017348">
    <property type="entry name" value="PIM1/2/3"/>
</dbReference>
<dbReference type="InterPro" id="IPR051138">
    <property type="entry name" value="PIM_Ser/Thr_kinase"/>
</dbReference>
<dbReference type="InterPro" id="IPR000719">
    <property type="entry name" value="Prot_kinase_dom"/>
</dbReference>
<dbReference type="InterPro" id="IPR008271">
    <property type="entry name" value="Ser/Thr_kinase_AS"/>
</dbReference>
<dbReference type="PANTHER" id="PTHR22984">
    <property type="entry name" value="SERINE/THREONINE-PROTEIN KINASE PIM"/>
    <property type="match status" value="1"/>
</dbReference>
<dbReference type="PANTHER" id="PTHR22984:SF26">
    <property type="entry name" value="SERINE_THREONINE-PROTEIN KINASE PIM-3"/>
    <property type="match status" value="1"/>
</dbReference>
<dbReference type="Pfam" id="PF00069">
    <property type="entry name" value="Pkinase"/>
    <property type="match status" value="1"/>
</dbReference>
<dbReference type="PIRSF" id="PIRSF037993">
    <property type="entry name" value="STPK_Pim-1"/>
    <property type="match status" value="1"/>
</dbReference>
<dbReference type="SMART" id="SM00220">
    <property type="entry name" value="S_TKc"/>
    <property type="match status" value="1"/>
</dbReference>
<dbReference type="SUPFAM" id="SSF56112">
    <property type="entry name" value="Protein kinase-like (PK-like)"/>
    <property type="match status" value="1"/>
</dbReference>
<dbReference type="PROSITE" id="PS50011">
    <property type="entry name" value="PROTEIN_KINASE_DOM"/>
    <property type="match status" value="1"/>
</dbReference>
<dbReference type="PROSITE" id="PS00108">
    <property type="entry name" value="PROTEIN_KINASE_ST"/>
    <property type="match status" value="1"/>
</dbReference>